<organism>
    <name type="scientific">Trypanosoma brucei brucei (strain 927/4 GUTat10.1)</name>
    <dbReference type="NCBI Taxonomy" id="185431"/>
    <lineage>
        <taxon>Eukaryota</taxon>
        <taxon>Discoba</taxon>
        <taxon>Euglenozoa</taxon>
        <taxon>Kinetoplastea</taxon>
        <taxon>Metakinetoplastina</taxon>
        <taxon>Trypanosomatida</taxon>
        <taxon>Trypanosomatidae</taxon>
        <taxon>Trypanosoma</taxon>
    </lineage>
</organism>
<proteinExistence type="inferred from homology"/>
<protein>
    <recommendedName>
        <fullName evidence="1">NAD-dependent protein deacylase SIR2rp3</fullName>
        <ecNumber evidence="1">2.3.1.-</ecNumber>
    </recommendedName>
    <alternativeName>
        <fullName evidence="1">Regulatory protein SIR2 homolog 5</fullName>
    </alternativeName>
    <alternativeName>
        <fullName>SIR2-related protein 3</fullName>
    </alternativeName>
</protein>
<comment type="function">
    <text evidence="1">NAD-dependent lysine demalonylase, desuccinylase and deglutarylase that specifically removes malonyl, succinyl and glutaryl groups on target proteins. Has weak NAD-dependent protein deacetylase activity; however this activity may not be physiologically relevant in vivo.</text>
</comment>
<comment type="catalytic activity">
    <reaction evidence="1">
        <text>N(6)-malonyl-L-lysyl-[protein] + NAD(+) + H2O = 2''-O-malonyl-ADP-D-ribose + nicotinamide + L-lysyl-[protein]</text>
        <dbReference type="Rhea" id="RHEA:47672"/>
        <dbReference type="Rhea" id="RHEA-COMP:9752"/>
        <dbReference type="Rhea" id="RHEA-COMP:11878"/>
        <dbReference type="ChEBI" id="CHEBI:15377"/>
        <dbReference type="ChEBI" id="CHEBI:17154"/>
        <dbReference type="ChEBI" id="CHEBI:29969"/>
        <dbReference type="ChEBI" id="CHEBI:57540"/>
        <dbReference type="ChEBI" id="CHEBI:87831"/>
        <dbReference type="ChEBI" id="CHEBI:87833"/>
    </reaction>
</comment>
<comment type="catalytic activity">
    <reaction evidence="1">
        <text>N(6)-succinyl-L-lysyl-[protein] + NAD(+) + H2O = 2''-O-succinyl-ADP-D-ribose + nicotinamide + L-lysyl-[protein]</text>
        <dbReference type="Rhea" id="RHEA:47668"/>
        <dbReference type="Rhea" id="RHEA-COMP:9752"/>
        <dbReference type="Rhea" id="RHEA-COMP:11877"/>
        <dbReference type="ChEBI" id="CHEBI:15377"/>
        <dbReference type="ChEBI" id="CHEBI:17154"/>
        <dbReference type="ChEBI" id="CHEBI:29969"/>
        <dbReference type="ChEBI" id="CHEBI:57540"/>
        <dbReference type="ChEBI" id="CHEBI:87830"/>
        <dbReference type="ChEBI" id="CHEBI:87832"/>
    </reaction>
</comment>
<comment type="catalytic activity">
    <reaction evidence="1">
        <text>N(6)-glutaryl-L-lysyl-[protein] + NAD(+) + H2O = 2''-O-glutaryl-ADP-D-ribose + nicotinamide + L-lysyl-[protein]</text>
        <dbReference type="Rhea" id="RHEA:47664"/>
        <dbReference type="Rhea" id="RHEA-COMP:9752"/>
        <dbReference type="Rhea" id="RHEA-COMP:11875"/>
        <dbReference type="ChEBI" id="CHEBI:15377"/>
        <dbReference type="ChEBI" id="CHEBI:17154"/>
        <dbReference type="ChEBI" id="CHEBI:29969"/>
        <dbReference type="ChEBI" id="CHEBI:57540"/>
        <dbReference type="ChEBI" id="CHEBI:87828"/>
        <dbReference type="ChEBI" id="CHEBI:87829"/>
    </reaction>
</comment>
<comment type="cofactor">
    <cofactor evidence="1">
        <name>Zn(2+)</name>
        <dbReference type="ChEBI" id="CHEBI:29105"/>
    </cofactor>
    <text evidence="1">Binds 1 zinc ion per subunit.</text>
</comment>
<comment type="subcellular location">
    <subcellularLocation>
        <location evidence="1 3">Mitochondrion</location>
    </subcellularLocation>
</comment>
<comment type="domain">
    <text evidence="1">In contrast to class I sirtuins, class III sirtuins have only weak deacetylase activity. Difference in substrate specificity is probably due to a larger hydrophobic pocket with 2 residues (Tyr-57 and Arg-60) that bind to malonylated and succinylated substrates and define the specificity.</text>
</comment>
<comment type="miscellaneous">
    <text evidence="1">This protein may be expected to contain an N-terminal transit peptide but none has been predicted.</text>
</comment>
<comment type="similarity">
    <text evidence="1">Belongs to the sirtuin family. Class III subfamily.</text>
</comment>
<gene>
    <name type="primary">SIR2rp3</name>
    <name type="ORF">Tb927.4.2520</name>
</gene>
<reference key="1">
    <citation type="journal article" date="2005" name="Science">
        <title>The genome of the African trypanosome Trypanosoma brucei.</title>
        <authorList>
            <person name="Berriman M."/>
            <person name="Ghedin E."/>
            <person name="Hertz-Fowler C."/>
            <person name="Blandin G."/>
            <person name="Renauld H."/>
            <person name="Bartholomeu D.C."/>
            <person name="Lennard N.J."/>
            <person name="Caler E."/>
            <person name="Hamlin N.E."/>
            <person name="Haas B."/>
            <person name="Bohme U."/>
            <person name="Hannick L."/>
            <person name="Aslett M.A."/>
            <person name="Shallom J."/>
            <person name="Marcello L."/>
            <person name="Hou L."/>
            <person name="Wickstead B."/>
            <person name="Alsmark U.C.M."/>
            <person name="Arrowsmith C."/>
            <person name="Atkin R.J."/>
            <person name="Barron A.J."/>
            <person name="Bringaud F."/>
            <person name="Brooks K."/>
            <person name="Carrington M."/>
            <person name="Cherevach I."/>
            <person name="Chillingworth T.J."/>
            <person name="Churcher C."/>
            <person name="Clark L.N."/>
            <person name="Corton C.H."/>
            <person name="Cronin A."/>
            <person name="Davies R.M."/>
            <person name="Doggett J."/>
            <person name="Djikeng A."/>
            <person name="Feldblyum T."/>
            <person name="Field M.C."/>
            <person name="Fraser A."/>
            <person name="Goodhead I."/>
            <person name="Hance Z."/>
            <person name="Harper D."/>
            <person name="Harris B.R."/>
            <person name="Hauser H."/>
            <person name="Hostetler J."/>
            <person name="Ivens A."/>
            <person name="Jagels K."/>
            <person name="Johnson D."/>
            <person name="Johnson J."/>
            <person name="Jones K."/>
            <person name="Kerhornou A.X."/>
            <person name="Koo H."/>
            <person name="Larke N."/>
            <person name="Landfear S."/>
            <person name="Larkin C."/>
            <person name="Leech V."/>
            <person name="Line A."/>
            <person name="Lord A."/>
            <person name="Macleod A."/>
            <person name="Mooney P.J."/>
            <person name="Moule S."/>
            <person name="Martin D.M."/>
            <person name="Morgan G.W."/>
            <person name="Mungall K."/>
            <person name="Norbertczak H."/>
            <person name="Ormond D."/>
            <person name="Pai G."/>
            <person name="Peacock C.S."/>
            <person name="Peterson J."/>
            <person name="Quail M.A."/>
            <person name="Rabbinowitsch E."/>
            <person name="Rajandream M.A."/>
            <person name="Reitter C."/>
            <person name="Salzberg S.L."/>
            <person name="Sanders M."/>
            <person name="Schobel S."/>
            <person name="Sharp S."/>
            <person name="Simmonds M."/>
            <person name="Simpson A.J."/>
            <person name="Tallon L."/>
            <person name="Turner C.M."/>
            <person name="Tait A."/>
            <person name="Tivey A.R."/>
            <person name="Van Aken S."/>
            <person name="Walker D."/>
            <person name="Wanless D."/>
            <person name="Wang S."/>
            <person name="White B."/>
            <person name="White O."/>
            <person name="Whitehead S."/>
            <person name="Woodward J."/>
            <person name="Wortman J."/>
            <person name="Adams M.D."/>
            <person name="Embley T.M."/>
            <person name="Gull K."/>
            <person name="Ullu E."/>
            <person name="Barry J.D."/>
            <person name="Fairlamb A.H."/>
            <person name="Opperdoes F."/>
            <person name="Barrell B.G."/>
            <person name="Donelson J.E."/>
            <person name="Hall N."/>
            <person name="Fraser C.M."/>
            <person name="Melville S.E."/>
            <person name="El-Sayed N.M.A."/>
        </authorList>
    </citation>
    <scope>NUCLEOTIDE SEQUENCE [LARGE SCALE GENOMIC DNA]</scope>
    <source>
        <strain evidence="4">927/4 GUTat10.1</strain>
    </source>
</reference>
<reference key="2">
    <citation type="journal article" date="2007" name="Mol. Microbiol.">
        <title>A sirtuin in the African trypanosome is involved in both DNA repair and telomeric gene silencing but is not required for antigenic variation.</title>
        <authorList>
            <person name="Alsford S."/>
            <person name="Kawahara T."/>
            <person name="Isamah C."/>
            <person name="Horn D."/>
        </authorList>
    </citation>
    <scope>SUBCELLULAR LOCATION</scope>
</reference>
<name>SIR5_TRYB2</name>
<keyword id="KW-0479">Metal-binding</keyword>
<keyword id="KW-0496">Mitochondrion</keyword>
<keyword id="KW-0520">NAD</keyword>
<keyword id="KW-1185">Reference proteome</keyword>
<keyword id="KW-0808">Transferase</keyword>
<keyword id="KW-0862">Zinc</keyword>
<sequence>MRRPNGMIAILTGAGISAESGISTFRDQNGLWENHRVEDVCTPAAFLKQPTVVQRFYNERRRALLSPEVKPNASHQALARLQREYKDGQVVIITQNIDDLHERAGSRQVLHMHGELLKVRCTATGRVFESREDVIHGESKCECCGVVETLRPHIVWFNEMPLYMDVIDEVVQNAGLFVAVGTSGNVYPAAGLVMIAKAHGAETLELNLEPSGNCRDFDRSVYGPASVIVPAWADEVLHGKGPAA</sequence>
<dbReference type="EC" id="2.3.1.-" evidence="1"/>
<dbReference type="EMBL" id="AC079933">
    <property type="protein sequence ID" value="AAX79070.1"/>
    <property type="molecule type" value="Genomic_DNA"/>
</dbReference>
<dbReference type="EMBL" id="CP000067">
    <property type="protein sequence ID" value="AAZ10843.1"/>
    <property type="molecule type" value="Genomic_DNA"/>
</dbReference>
<dbReference type="RefSeq" id="XP_844402.1">
    <property type="nucleotide sequence ID" value="XM_839309.1"/>
</dbReference>
<dbReference type="SMR" id="Q584D5"/>
<dbReference type="STRING" id="185431.Q584D5"/>
<dbReference type="PaxDb" id="5691-AAZ10843"/>
<dbReference type="GeneID" id="3656777"/>
<dbReference type="KEGG" id="tbr:Tb927.4.2520"/>
<dbReference type="VEuPathDB" id="TriTrypDB:Tb927.4.2520"/>
<dbReference type="eggNOG" id="KOG2684">
    <property type="taxonomic scope" value="Eukaryota"/>
</dbReference>
<dbReference type="InParanoid" id="Q584D5"/>
<dbReference type="OMA" id="KWIAAGP"/>
<dbReference type="OrthoDB" id="424302at2759"/>
<dbReference type="Proteomes" id="UP000008524">
    <property type="component" value="Chromosome 4"/>
</dbReference>
<dbReference type="GO" id="GO:0005737">
    <property type="term" value="C:cytoplasm"/>
    <property type="evidence" value="ECO:0000314"/>
    <property type="project" value="GeneDB"/>
</dbReference>
<dbReference type="GO" id="GO:0005739">
    <property type="term" value="C:mitochondrion"/>
    <property type="evidence" value="ECO:0000314"/>
    <property type="project" value="GeneDB"/>
</dbReference>
<dbReference type="GO" id="GO:0005634">
    <property type="term" value="C:nucleus"/>
    <property type="evidence" value="ECO:0000314"/>
    <property type="project" value="GeneDB"/>
</dbReference>
<dbReference type="GO" id="GO:0017136">
    <property type="term" value="F:histone deacetylase activity, NAD-dependent"/>
    <property type="evidence" value="ECO:0000318"/>
    <property type="project" value="GO_Central"/>
</dbReference>
<dbReference type="GO" id="GO:0070403">
    <property type="term" value="F:NAD+ binding"/>
    <property type="evidence" value="ECO:0000318"/>
    <property type="project" value="GO_Central"/>
</dbReference>
<dbReference type="GO" id="GO:0061697">
    <property type="term" value="F:protein-glutaryllysine deglutarylase activity"/>
    <property type="evidence" value="ECO:0007669"/>
    <property type="project" value="RHEA"/>
</dbReference>
<dbReference type="GO" id="GO:0036054">
    <property type="term" value="F:protein-malonyllysine demalonylase activity"/>
    <property type="evidence" value="ECO:0007669"/>
    <property type="project" value="UniProtKB-UniRule"/>
</dbReference>
<dbReference type="GO" id="GO:0036055">
    <property type="term" value="F:protein-succinyllysine desuccinylase activity"/>
    <property type="evidence" value="ECO:0007669"/>
    <property type="project" value="UniProtKB-UniRule"/>
</dbReference>
<dbReference type="GO" id="GO:0008270">
    <property type="term" value="F:zinc ion binding"/>
    <property type="evidence" value="ECO:0007669"/>
    <property type="project" value="UniProtKB-UniRule"/>
</dbReference>
<dbReference type="GO" id="GO:0010608">
    <property type="term" value="P:post-transcriptional regulation of gene expression"/>
    <property type="evidence" value="ECO:0000314"/>
    <property type="project" value="GeneDB"/>
</dbReference>
<dbReference type="CDD" id="cd01412">
    <property type="entry name" value="SIRT5_Af1_CobB"/>
    <property type="match status" value="1"/>
</dbReference>
<dbReference type="Gene3D" id="3.30.1600.10">
    <property type="entry name" value="SIR2/SIRT2 'Small Domain"/>
    <property type="match status" value="1"/>
</dbReference>
<dbReference type="Gene3D" id="3.40.50.1220">
    <property type="entry name" value="TPP-binding domain"/>
    <property type="match status" value="1"/>
</dbReference>
<dbReference type="HAMAP" id="MF_01121">
    <property type="entry name" value="Sirtuin_ClassIII"/>
    <property type="match status" value="1"/>
</dbReference>
<dbReference type="InterPro" id="IPR029035">
    <property type="entry name" value="DHS-like_NAD/FAD-binding_dom"/>
</dbReference>
<dbReference type="InterPro" id="IPR050134">
    <property type="entry name" value="NAD-dep_sirtuin_deacylases"/>
</dbReference>
<dbReference type="InterPro" id="IPR003000">
    <property type="entry name" value="Sirtuin"/>
</dbReference>
<dbReference type="InterPro" id="IPR026591">
    <property type="entry name" value="Sirtuin_cat_small_dom_sf"/>
</dbReference>
<dbReference type="InterPro" id="IPR027546">
    <property type="entry name" value="Sirtuin_class_III"/>
</dbReference>
<dbReference type="InterPro" id="IPR026590">
    <property type="entry name" value="Ssirtuin_cat_dom"/>
</dbReference>
<dbReference type="NCBIfam" id="NF001755">
    <property type="entry name" value="PRK00481.1-5"/>
    <property type="match status" value="1"/>
</dbReference>
<dbReference type="PANTHER" id="PTHR11085:SF4">
    <property type="entry name" value="NAD-DEPENDENT PROTEIN DEACYLASE"/>
    <property type="match status" value="1"/>
</dbReference>
<dbReference type="PANTHER" id="PTHR11085">
    <property type="entry name" value="NAD-DEPENDENT PROTEIN DEACYLASE SIRTUIN-5, MITOCHONDRIAL-RELATED"/>
    <property type="match status" value="1"/>
</dbReference>
<dbReference type="Pfam" id="PF02146">
    <property type="entry name" value="SIR2"/>
    <property type="match status" value="1"/>
</dbReference>
<dbReference type="SUPFAM" id="SSF52467">
    <property type="entry name" value="DHS-like NAD/FAD-binding domain"/>
    <property type="match status" value="1"/>
</dbReference>
<dbReference type="PROSITE" id="PS50305">
    <property type="entry name" value="SIRTUIN"/>
    <property type="match status" value="1"/>
</dbReference>
<evidence type="ECO:0000255" key="1">
    <source>
        <dbReference type="HAMAP-Rule" id="MF_03160"/>
    </source>
</evidence>
<evidence type="ECO:0000255" key="2">
    <source>
        <dbReference type="PROSITE-ProRule" id="PRU00236"/>
    </source>
</evidence>
<evidence type="ECO:0000269" key="3">
    <source>
    </source>
</evidence>
<evidence type="ECO:0000312" key="4">
    <source>
        <dbReference type="Proteomes" id="UP000008524"/>
    </source>
</evidence>
<accession>Q584D5</accession>
<accession>D6XFI8</accession>
<feature type="chain" id="PRO_0000417426" description="NAD-dependent protein deacylase SIR2rp3">
    <location>
        <begin position="1"/>
        <end position="244"/>
    </location>
</feature>
<feature type="domain" description="Deacetylase sirtuin-type" evidence="2">
    <location>
        <begin position="1"/>
        <end position="239"/>
    </location>
</feature>
<feature type="active site" description="Proton acceptor" evidence="1">
    <location>
        <position position="113"/>
    </location>
</feature>
<feature type="binding site" evidence="1">
    <location>
        <begin position="13"/>
        <end position="32"/>
    </location>
    <ligand>
        <name>NAD(+)</name>
        <dbReference type="ChEBI" id="CHEBI:57540"/>
    </ligand>
</feature>
<feature type="binding site" evidence="1">
    <location>
        <position position="57"/>
    </location>
    <ligand>
        <name>substrate</name>
    </ligand>
</feature>
<feature type="binding site" evidence="1">
    <location>
        <position position="60"/>
    </location>
    <ligand>
        <name>substrate</name>
    </ligand>
</feature>
<feature type="binding site" evidence="1">
    <location>
        <begin position="95"/>
        <end position="98"/>
    </location>
    <ligand>
        <name>NAD(+)</name>
        <dbReference type="ChEBI" id="CHEBI:57540"/>
    </ligand>
</feature>
<feature type="binding site" evidence="1">
    <location>
        <position position="121"/>
    </location>
    <ligand>
        <name>Zn(2+)</name>
        <dbReference type="ChEBI" id="CHEBI:29105"/>
    </ligand>
</feature>
<feature type="binding site" evidence="1">
    <location>
        <position position="141"/>
    </location>
    <ligand>
        <name>Zn(2+)</name>
        <dbReference type="ChEBI" id="CHEBI:29105"/>
    </ligand>
</feature>
<feature type="binding site" evidence="1">
    <location>
        <begin position="181"/>
        <end position="183"/>
    </location>
    <ligand>
        <name>NAD(+)</name>
        <dbReference type="ChEBI" id="CHEBI:57540"/>
    </ligand>
</feature>
<feature type="binding site" evidence="1">
    <location>
        <position position="225"/>
    </location>
    <ligand>
        <name>NAD(+)</name>
        <dbReference type="ChEBI" id="CHEBI:57540"/>
    </ligand>
</feature>